<evidence type="ECO:0000255" key="1">
    <source>
        <dbReference type="HAMAP-Rule" id="MF_00318"/>
    </source>
</evidence>
<comment type="function">
    <text evidence="1">Catalyzes the reversible conversion of 2-phosphoglycerate (2-PG) into phosphoenolpyruvate (PEP). It is essential for the degradation of carbohydrates via glycolysis.</text>
</comment>
<comment type="catalytic activity">
    <reaction evidence="1">
        <text>(2R)-2-phosphoglycerate = phosphoenolpyruvate + H2O</text>
        <dbReference type="Rhea" id="RHEA:10164"/>
        <dbReference type="ChEBI" id="CHEBI:15377"/>
        <dbReference type="ChEBI" id="CHEBI:58289"/>
        <dbReference type="ChEBI" id="CHEBI:58702"/>
        <dbReference type="EC" id="4.2.1.11"/>
    </reaction>
</comment>
<comment type="cofactor">
    <cofactor evidence="1">
        <name>Mg(2+)</name>
        <dbReference type="ChEBI" id="CHEBI:18420"/>
    </cofactor>
    <text evidence="1">Binds a second Mg(2+) ion via substrate during catalysis.</text>
</comment>
<comment type="pathway">
    <text evidence="1">Carbohydrate degradation; glycolysis; pyruvate from D-glyceraldehyde 3-phosphate: step 4/5.</text>
</comment>
<comment type="subcellular location">
    <subcellularLocation>
        <location evidence="1">Cytoplasm</location>
    </subcellularLocation>
    <subcellularLocation>
        <location evidence="1">Secreted</location>
    </subcellularLocation>
    <subcellularLocation>
        <location evidence="1">Cell surface</location>
    </subcellularLocation>
    <text evidence="1">Fractions of enolase are present in both the cytoplasm and on the cell surface.</text>
</comment>
<comment type="similarity">
    <text evidence="1">Belongs to the enolase family.</text>
</comment>
<reference key="1">
    <citation type="submission" date="2008-05" db="EMBL/GenBank/DDBJ databases">
        <title>Genome sequence of Helicobacter pylori from the remote Amazon: traces of Asian ancestry of the first Americans.</title>
        <authorList>
            <person name="Kersulyte D."/>
            <person name="Kalia A."/>
            <person name="Gilman R.H."/>
            <person name="Berg D.E."/>
        </authorList>
    </citation>
    <scope>NUCLEOTIDE SEQUENCE [LARGE SCALE GENOMIC DNA]</scope>
    <source>
        <strain>Shi470</strain>
    </source>
</reference>
<name>ENO_HELPS</name>
<proteinExistence type="inferred from homology"/>
<organism>
    <name type="scientific">Helicobacter pylori (strain Shi470)</name>
    <dbReference type="NCBI Taxonomy" id="512562"/>
    <lineage>
        <taxon>Bacteria</taxon>
        <taxon>Pseudomonadati</taxon>
        <taxon>Campylobacterota</taxon>
        <taxon>Epsilonproteobacteria</taxon>
        <taxon>Campylobacterales</taxon>
        <taxon>Helicobacteraceae</taxon>
        <taxon>Helicobacter</taxon>
    </lineage>
</organism>
<accession>B2URY4</accession>
<gene>
    <name evidence="1" type="primary">eno</name>
    <name type="ordered locus">HPSH_00780</name>
</gene>
<feature type="chain" id="PRO_1000115872" description="Enolase">
    <location>
        <begin position="1"/>
        <end position="426"/>
    </location>
</feature>
<feature type="active site" description="Proton donor" evidence="1">
    <location>
        <position position="205"/>
    </location>
</feature>
<feature type="active site" description="Proton acceptor" evidence="1">
    <location>
        <position position="338"/>
    </location>
</feature>
<feature type="binding site" evidence="1">
    <location>
        <position position="163"/>
    </location>
    <ligand>
        <name>(2R)-2-phosphoglycerate</name>
        <dbReference type="ChEBI" id="CHEBI:58289"/>
    </ligand>
</feature>
<feature type="binding site" evidence="1">
    <location>
        <position position="242"/>
    </location>
    <ligand>
        <name>Mg(2+)</name>
        <dbReference type="ChEBI" id="CHEBI:18420"/>
    </ligand>
</feature>
<feature type="binding site" evidence="1">
    <location>
        <position position="286"/>
    </location>
    <ligand>
        <name>Mg(2+)</name>
        <dbReference type="ChEBI" id="CHEBI:18420"/>
    </ligand>
</feature>
<feature type="binding site" evidence="1">
    <location>
        <position position="313"/>
    </location>
    <ligand>
        <name>Mg(2+)</name>
        <dbReference type="ChEBI" id="CHEBI:18420"/>
    </ligand>
</feature>
<feature type="binding site" evidence="1">
    <location>
        <position position="338"/>
    </location>
    <ligand>
        <name>(2R)-2-phosphoglycerate</name>
        <dbReference type="ChEBI" id="CHEBI:58289"/>
    </ligand>
</feature>
<feature type="binding site" evidence="1">
    <location>
        <position position="367"/>
    </location>
    <ligand>
        <name>(2R)-2-phosphoglycerate</name>
        <dbReference type="ChEBI" id="CHEBI:58289"/>
    </ligand>
</feature>
<feature type="binding site" evidence="1">
    <location>
        <position position="368"/>
    </location>
    <ligand>
        <name>(2R)-2-phosphoglycerate</name>
        <dbReference type="ChEBI" id="CHEBI:58289"/>
    </ligand>
</feature>
<feature type="binding site" evidence="1">
    <location>
        <position position="389"/>
    </location>
    <ligand>
        <name>(2R)-2-phosphoglycerate</name>
        <dbReference type="ChEBI" id="CHEBI:58289"/>
    </ligand>
</feature>
<protein>
    <recommendedName>
        <fullName evidence="1">Enolase</fullName>
        <ecNumber evidence="1">4.2.1.11</ecNumber>
    </recommendedName>
    <alternativeName>
        <fullName evidence="1">2-phospho-D-glycerate hydro-lyase</fullName>
    </alternativeName>
    <alternativeName>
        <fullName evidence="1">2-phosphoglycerate dehydratase</fullName>
    </alternativeName>
</protein>
<keyword id="KW-0963">Cytoplasm</keyword>
<keyword id="KW-0324">Glycolysis</keyword>
<keyword id="KW-0456">Lyase</keyword>
<keyword id="KW-0460">Magnesium</keyword>
<keyword id="KW-0479">Metal-binding</keyword>
<keyword id="KW-0964">Secreted</keyword>
<dbReference type="EC" id="4.2.1.11" evidence="1"/>
<dbReference type="EMBL" id="CP001072">
    <property type="protein sequence ID" value="ACD47616.1"/>
    <property type="molecule type" value="Genomic_DNA"/>
</dbReference>
<dbReference type="RefSeq" id="WP_000955686.1">
    <property type="nucleotide sequence ID" value="NC_010698.2"/>
</dbReference>
<dbReference type="SMR" id="B2URY4"/>
<dbReference type="KEGG" id="hps:HPSH_00780"/>
<dbReference type="HOGENOM" id="CLU_031223_2_1_7"/>
<dbReference type="UniPathway" id="UPA00109">
    <property type="reaction ID" value="UER00187"/>
</dbReference>
<dbReference type="GO" id="GO:0009986">
    <property type="term" value="C:cell surface"/>
    <property type="evidence" value="ECO:0007669"/>
    <property type="project" value="UniProtKB-SubCell"/>
</dbReference>
<dbReference type="GO" id="GO:0005576">
    <property type="term" value="C:extracellular region"/>
    <property type="evidence" value="ECO:0007669"/>
    <property type="project" value="UniProtKB-SubCell"/>
</dbReference>
<dbReference type="GO" id="GO:0000015">
    <property type="term" value="C:phosphopyruvate hydratase complex"/>
    <property type="evidence" value="ECO:0007669"/>
    <property type="project" value="InterPro"/>
</dbReference>
<dbReference type="GO" id="GO:0000287">
    <property type="term" value="F:magnesium ion binding"/>
    <property type="evidence" value="ECO:0007669"/>
    <property type="project" value="UniProtKB-UniRule"/>
</dbReference>
<dbReference type="GO" id="GO:0004634">
    <property type="term" value="F:phosphopyruvate hydratase activity"/>
    <property type="evidence" value="ECO:0007669"/>
    <property type="project" value="UniProtKB-UniRule"/>
</dbReference>
<dbReference type="GO" id="GO:0006096">
    <property type="term" value="P:glycolytic process"/>
    <property type="evidence" value="ECO:0007669"/>
    <property type="project" value="UniProtKB-UniRule"/>
</dbReference>
<dbReference type="CDD" id="cd03313">
    <property type="entry name" value="enolase"/>
    <property type="match status" value="1"/>
</dbReference>
<dbReference type="Gene3D" id="3.20.20.120">
    <property type="entry name" value="Enolase-like C-terminal domain"/>
    <property type="match status" value="1"/>
</dbReference>
<dbReference type="Gene3D" id="3.30.390.10">
    <property type="entry name" value="Enolase-like, N-terminal domain"/>
    <property type="match status" value="1"/>
</dbReference>
<dbReference type="HAMAP" id="MF_00318">
    <property type="entry name" value="Enolase"/>
    <property type="match status" value="1"/>
</dbReference>
<dbReference type="InterPro" id="IPR000941">
    <property type="entry name" value="Enolase"/>
</dbReference>
<dbReference type="InterPro" id="IPR036849">
    <property type="entry name" value="Enolase-like_C_sf"/>
</dbReference>
<dbReference type="InterPro" id="IPR029017">
    <property type="entry name" value="Enolase-like_N"/>
</dbReference>
<dbReference type="InterPro" id="IPR020810">
    <property type="entry name" value="Enolase_C"/>
</dbReference>
<dbReference type="InterPro" id="IPR020809">
    <property type="entry name" value="Enolase_CS"/>
</dbReference>
<dbReference type="InterPro" id="IPR020811">
    <property type="entry name" value="Enolase_N"/>
</dbReference>
<dbReference type="NCBIfam" id="TIGR01060">
    <property type="entry name" value="eno"/>
    <property type="match status" value="1"/>
</dbReference>
<dbReference type="PANTHER" id="PTHR11902">
    <property type="entry name" value="ENOLASE"/>
    <property type="match status" value="1"/>
</dbReference>
<dbReference type="PANTHER" id="PTHR11902:SF1">
    <property type="entry name" value="ENOLASE"/>
    <property type="match status" value="1"/>
</dbReference>
<dbReference type="Pfam" id="PF00113">
    <property type="entry name" value="Enolase_C"/>
    <property type="match status" value="1"/>
</dbReference>
<dbReference type="Pfam" id="PF03952">
    <property type="entry name" value="Enolase_N"/>
    <property type="match status" value="1"/>
</dbReference>
<dbReference type="PIRSF" id="PIRSF001400">
    <property type="entry name" value="Enolase"/>
    <property type="match status" value="1"/>
</dbReference>
<dbReference type="PRINTS" id="PR00148">
    <property type="entry name" value="ENOLASE"/>
</dbReference>
<dbReference type="SFLD" id="SFLDF00002">
    <property type="entry name" value="enolase"/>
    <property type="match status" value="1"/>
</dbReference>
<dbReference type="SFLD" id="SFLDG00178">
    <property type="entry name" value="enolase"/>
    <property type="match status" value="1"/>
</dbReference>
<dbReference type="SMART" id="SM01192">
    <property type="entry name" value="Enolase_C"/>
    <property type="match status" value="1"/>
</dbReference>
<dbReference type="SMART" id="SM01193">
    <property type="entry name" value="Enolase_N"/>
    <property type="match status" value="1"/>
</dbReference>
<dbReference type="SUPFAM" id="SSF51604">
    <property type="entry name" value="Enolase C-terminal domain-like"/>
    <property type="match status" value="1"/>
</dbReference>
<dbReference type="SUPFAM" id="SSF54826">
    <property type="entry name" value="Enolase N-terminal domain-like"/>
    <property type="match status" value="1"/>
</dbReference>
<dbReference type="PROSITE" id="PS00164">
    <property type="entry name" value="ENOLASE"/>
    <property type="match status" value="1"/>
</dbReference>
<sequence length="426" mass="46636">MLTIKDVHALEVMDSRGNPTIQASVILSDNTKASAIVPSGASTGKREALELRDNDKTRFLGKGVLRACENVNSVIKHHLIGLEAINQAFVDERLRALDGTPNYANLGANAVLGVSMALARASAKALNLPLYRYLGGANALTLPVPMLNIINGGTHANNSIDFQEYMIMPLGFESFREALRASAEVYHTLKKLLDGKNQLTSVGDEGGFAPNFNNNVEPLEVISQAIEKAGYKLGEEIALALDVASSELVDENFNYHLKGENKILDSHELVAYYKKFVAKYPIVSIEDGLSEDDWEGWAFLSKELGRQIQLVGDDLFVTNASLLQKGIEKNIANAILIKPNQIGTISETLETIRLAKHHAYQCVMSHRSGESEDSFIADFAVALNTGEIKTGSTARSERIAKYNRLLEIEHELKGGIYIGKELFKHG</sequence>